<feature type="chain" id="PRO_0000172588" description="Phosphatidylglycerol--prolipoprotein diacylglyceryl transferase">
    <location>
        <begin position="1"/>
        <end position="249"/>
    </location>
</feature>
<feature type="transmembrane region" description="Helical" evidence="1">
    <location>
        <begin position="11"/>
        <end position="31"/>
    </location>
</feature>
<feature type="transmembrane region" description="Helical" evidence="1">
    <location>
        <begin position="49"/>
        <end position="69"/>
    </location>
</feature>
<feature type="transmembrane region" description="Helical" evidence="1">
    <location>
        <begin position="82"/>
        <end position="102"/>
    </location>
</feature>
<feature type="transmembrane region" description="Helical" evidence="1">
    <location>
        <begin position="116"/>
        <end position="136"/>
    </location>
</feature>
<feature type="transmembrane region" description="Helical" evidence="1">
    <location>
        <begin position="163"/>
        <end position="183"/>
    </location>
</feature>
<feature type="transmembrane region" description="Helical" evidence="1">
    <location>
        <begin position="192"/>
        <end position="212"/>
    </location>
</feature>
<feature type="transmembrane region" description="Helical" evidence="1">
    <location>
        <begin position="223"/>
        <end position="243"/>
    </location>
</feature>
<feature type="binding site" evidence="1">
    <location>
        <position position="129"/>
    </location>
    <ligand>
        <name>a 1,2-diacyl-sn-glycero-3-phospho-(1'-sn-glycerol)</name>
        <dbReference type="ChEBI" id="CHEBI:64716"/>
    </ligand>
</feature>
<organism>
    <name type="scientific">Clostridium tetani (strain Massachusetts / E88)</name>
    <dbReference type="NCBI Taxonomy" id="212717"/>
    <lineage>
        <taxon>Bacteria</taxon>
        <taxon>Bacillati</taxon>
        <taxon>Bacillota</taxon>
        <taxon>Clostridia</taxon>
        <taxon>Eubacteriales</taxon>
        <taxon>Clostridiaceae</taxon>
        <taxon>Clostridium</taxon>
    </lineage>
</organism>
<evidence type="ECO:0000255" key="1">
    <source>
        <dbReference type="HAMAP-Rule" id="MF_01147"/>
    </source>
</evidence>
<sequence>MKPVLFELFGLKIYGYGAMIALGILAAVILLDKRSKKRGYNEDHIFNMAIVGIIGGILGGKLLYIIVDIKNIIDNPEILKDLGNGFVIYGAIIGGAISVYLYCKKKNWDVLKMLDLVVPSVALAQGFGRIGCFLAGCCYGKPTKLPIGVMFTNSPFAPSNIHLHPTQIYSSIFDFLLAFFLLWYSRKAEKSGRVFSLYVIIYGVGRVIVEFLRGDPRGNVSMLSTSQFISLFTIIIGIFVFNIDRFRKQ</sequence>
<keyword id="KW-1003">Cell membrane</keyword>
<keyword id="KW-0472">Membrane</keyword>
<keyword id="KW-1185">Reference proteome</keyword>
<keyword id="KW-0808">Transferase</keyword>
<keyword id="KW-0812">Transmembrane</keyword>
<keyword id="KW-1133">Transmembrane helix</keyword>
<reference key="1">
    <citation type="journal article" date="2003" name="Proc. Natl. Acad. Sci. U.S.A.">
        <title>The genome sequence of Clostridium tetani, the causative agent of tetanus disease.</title>
        <authorList>
            <person name="Brueggemann H."/>
            <person name="Baeumer S."/>
            <person name="Fricke W.F."/>
            <person name="Wiezer A."/>
            <person name="Liesegang H."/>
            <person name="Decker I."/>
            <person name="Herzberg C."/>
            <person name="Martinez-Arias R."/>
            <person name="Merkl R."/>
            <person name="Henne A."/>
            <person name="Gottschalk G."/>
        </authorList>
    </citation>
    <scope>NUCLEOTIDE SEQUENCE [LARGE SCALE GENOMIC DNA]</scope>
    <source>
        <strain>Massachusetts / E88</strain>
    </source>
</reference>
<accession>Q899D2</accession>
<proteinExistence type="inferred from homology"/>
<gene>
    <name evidence="1" type="primary">lgt</name>
    <name type="ordered locus">CTC_00251</name>
</gene>
<protein>
    <recommendedName>
        <fullName evidence="1">Phosphatidylglycerol--prolipoprotein diacylglyceryl transferase</fullName>
        <ecNumber evidence="1">2.5.1.145</ecNumber>
    </recommendedName>
</protein>
<comment type="function">
    <text evidence="1">Catalyzes the transfer of the diacylglyceryl group from phosphatidylglycerol to the sulfhydryl group of the N-terminal cysteine of a prolipoprotein, the first step in the formation of mature lipoproteins.</text>
</comment>
<comment type="catalytic activity">
    <reaction evidence="1">
        <text>L-cysteinyl-[prolipoprotein] + a 1,2-diacyl-sn-glycero-3-phospho-(1'-sn-glycerol) = an S-1,2-diacyl-sn-glyceryl-L-cysteinyl-[prolipoprotein] + sn-glycerol 1-phosphate + H(+)</text>
        <dbReference type="Rhea" id="RHEA:56712"/>
        <dbReference type="Rhea" id="RHEA-COMP:14679"/>
        <dbReference type="Rhea" id="RHEA-COMP:14680"/>
        <dbReference type="ChEBI" id="CHEBI:15378"/>
        <dbReference type="ChEBI" id="CHEBI:29950"/>
        <dbReference type="ChEBI" id="CHEBI:57685"/>
        <dbReference type="ChEBI" id="CHEBI:64716"/>
        <dbReference type="ChEBI" id="CHEBI:140658"/>
        <dbReference type="EC" id="2.5.1.145"/>
    </reaction>
</comment>
<comment type="pathway">
    <text evidence="1">Protein modification; lipoprotein biosynthesis (diacylglyceryl transfer).</text>
</comment>
<comment type="subcellular location">
    <subcellularLocation>
        <location evidence="1">Cell membrane</location>
        <topology evidence="1">Multi-pass membrane protein</topology>
    </subcellularLocation>
</comment>
<comment type="similarity">
    <text evidence="1">Belongs to the Lgt family.</text>
</comment>
<name>LGT_CLOTE</name>
<dbReference type="EC" id="2.5.1.145" evidence="1"/>
<dbReference type="EMBL" id="AE015927">
    <property type="protein sequence ID" value="AAO34897.1"/>
    <property type="molecule type" value="Genomic_DNA"/>
</dbReference>
<dbReference type="RefSeq" id="WP_011098564.1">
    <property type="nucleotide sequence ID" value="NC_004557.1"/>
</dbReference>
<dbReference type="SMR" id="Q899D2"/>
<dbReference type="STRING" id="212717.CTC_00251"/>
<dbReference type="GeneID" id="24253833"/>
<dbReference type="KEGG" id="ctc:CTC_00251"/>
<dbReference type="HOGENOM" id="CLU_013386_1_2_9"/>
<dbReference type="OrthoDB" id="871140at2"/>
<dbReference type="UniPathway" id="UPA00664"/>
<dbReference type="Proteomes" id="UP000001412">
    <property type="component" value="Chromosome"/>
</dbReference>
<dbReference type="GO" id="GO:0005886">
    <property type="term" value="C:plasma membrane"/>
    <property type="evidence" value="ECO:0007669"/>
    <property type="project" value="UniProtKB-SubCell"/>
</dbReference>
<dbReference type="GO" id="GO:0008961">
    <property type="term" value="F:phosphatidylglycerol-prolipoprotein diacylglyceryl transferase activity"/>
    <property type="evidence" value="ECO:0007669"/>
    <property type="project" value="UniProtKB-UniRule"/>
</dbReference>
<dbReference type="GO" id="GO:0042158">
    <property type="term" value="P:lipoprotein biosynthetic process"/>
    <property type="evidence" value="ECO:0007669"/>
    <property type="project" value="UniProtKB-UniRule"/>
</dbReference>
<dbReference type="HAMAP" id="MF_01147">
    <property type="entry name" value="Lgt"/>
    <property type="match status" value="1"/>
</dbReference>
<dbReference type="InterPro" id="IPR001640">
    <property type="entry name" value="Lgt"/>
</dbReference>
<dbReference type="NCBIfam" id="TIGR00544">
    <property type="entry name" value="lgt"/>
    <property type="match status" value="1"/>
</dbReference>
<dbReference type="NCBIfam" id="NF000778">
    <property type="entry name" value="PRK00052.3-4"/>
    <property type="match status" value="1"/>
</dbReference>
<dbReference type="PANTHER" id="PTHR30589:SF0">
    <property type="entry name" value="PHOSPHATIDYLGLYCEROL--PROLIPOPROTEIN DIACYLGLYCERYL TRANSFERASE"/>
    <property type="match status" value="1"/>
</dbReference>
<dbReference type="PANTHER" id="PTHR30589">
    <property type="entry name" value="PROLIPOPROTEIN DIACYLGLYCERYL TRANSFERASE"/>
    <property type="match status" value="1"/>
</dbReference>
<dbReference type="Pfam" id="PF01790">
    <property type="entry name" value="LGT"/>
    <property type="match status" value="1"/>
</dbReference>